<evidence type="ECO:0000250" key="1">
    <source>
        <dbReference type="UniProtKB" id="Q22KK0"/>
    </source>
</evidence>
<evidence type="ECO:0000255" key="2"/>
<evidence type="ECO:0000269" key="3">
    <source>
    </source>
</evidence>
<evidence type="ECO:0000303" key="4">
    <source>
    </source>
</evidence>
<evidence type="ECO:0000305" key="5"/>
<evidence type="ECO:0000312" key="6">
    <source>
        <dbReference type="HGNC" id="HGNC:25002"/>
    </source>
</evidence>
<keyword id="KW-0002">3D-structure</keyword>
<keyword id="KW-0025">Alternative splicing</keyword>
<keyword id="KW-0966">Cell projection</keyword>
<keyword id="KW-0970">Cilium biogenesis/degradation</keyword>
<keyword id="KW-0175">Coiled coil</keyword>
<keyword id="KW-0963">Cytoplasm</keyword>
<keyword id="KW-0206">Cytoskeleton</keyword>
<keyword id="KW-1267">Proteomics identification</keyword>
<keyword id="KW-1185">Reference proteome</keyword>
<protein>
    <recommendedName>
        <fullName evidence="5">Cilia- and flagella-associated protein 263</fullName>
    </recommendedName>
</protein>
<proteinExistence type="evidence at protein level"/>
<gene>
    <name evidence="6" type="primary">CFAP263</name>
    <name type="synonym">CCDC113</name>
    <name type="ORF">HSPC065</name>
</gene>
<feature type="chain" id="PRO_0000279399" description="Cilia- and flagella-associated protein 263">
    <location>
        <begin position="1"/>
        <end position="377"/>
    </location>
</feature>
<feature type="coiled-coil region" evidence="2">
    <location>
        <begin position="95"/>
        <end position="243"/>
    </location>
</feature>
<feature type="coiled-coil region" evidence="2">
    <location>
        <begin position="280"/>
        <end position="354"/>
    </location>
</feature>
<feature type="splice variant" id="VSP_042753" description="In isoform 2." evidence="4">
    <location>
        <begin position="77"/>
        <end position="130"/>
    </location>
</feature>
<feature type="sequence variant" id="VAR_030880" description="In dbSNP:rs8043587.">
    <original>D</original>
    <variation>E</variation>
    <location>
        <position position="4"/>
    </location>
</feature>
<feature type="sequence variant" id="VAR_030881" description="In dbSNP:rs8043590.">
    <original>S</original>
    <variation>T</variation>
    <location>
        <position position="6"/>
    </location>
</feature>
<feature type="sequence conflict" description="In Ref. 1; AAF29037." evidence="5" ref="1">
    <original>T</original>
    <variation>A</variation>
    <location>
        <position position="2"/>
    </location>
</feature>
<dbReference type="EMBL" id="AF161550">
    <property type="protein sequence ID" value="AAF29037.1"/>
    <property type="status" value="ALT_FRAME"/>
    <property type="molecule type" value="mRNA"/>
</dbReference>
<dbReference type="EMBL" id="AL136785">
    <property type="protein sequence ID" value="CAB66719.1"/>
    <property type="molecule type" value="mRNA"/>
</dbReference>
<dbReference type="EMBL" id="CR533506">
    <property type="protein sequence ID" value="CAG38537.1"/>
    <property type="molecule type" value="mRNA"/>
</dbReference>
<dbReference type="EMBL" id="AK299066">
    <property type="protein sequence ID" value="BAG61132.1"/>
    <property type="molecule type" value="mRNA"/>
</dbReference>
<dbReference type="EMBL" id="AK314300">
    <property type="protein sequence ID" value="BAG36954.1"/>
    <property type="molecule type" value="mRNA"/>
</dbReference>
<dbReference type="EMBL" id="AC009107">
    <property type="status" value="NOT_ANNOTATED_CDS"/>
    <property type="molecule type" value="Genomic_DNA"/>
</dbReference>
<dbReference type="EMBL" id="CH471092">
    <property type="protein sequence ID" value="EAW82970.1"/>
    <property type="molecule type" value="Genomic_DNA"/>
</dbReference>
<dbReference type="EMBL" id="BC126445">
    <property type="protein sequence ID" value="AAI26446.1"/>
    <property type="molecule type" value="mRNA"/>
</dbReference>
<dbReference type="EMBL" id="BC126447">
    <property type="protein sequence ID" value="AAI26448.1"/>
    <property type="molecule type" value="mRNA"/>
</dbReference>
<dbReference type="CCDS" id="CCDS10795.1">
    <molecule id="Q9H0I3-1"/>
</dbReference>
<dbReference type="CCDS" id="CCDS45497.1">
    <molecule id="Q9H0I3-2"/>
</dbReference>
<dbReference type="RefSeq" id="NP_001135774.1">
    <molecule id="Q9H0I3-2"/>
    <property type="nucleotide sequence ID" value="NM_001142302.2"/>
</dbReference>
<dbReference type="RefSeq" id="NP_054876.2">
    <molecule id="Q9H0I3-1"/>
    <property type="nucleotide sequence ID" value="NM_014157.3"/>
</dbReference>
<dbReference type="PDB" id="8J07">
    <property type="method" value="EM"/>
    <property type="resolution" value="4.10 A"/>
    <property type="chains" value="i2=1-377"/>
</dbReference>
<dbReference type="PDBsum" id="8J07"/>
<dbReference type="EMDB" id="EMD-35888"/>
<dbReference type="SMR" id="Q9H0I3"/>
<dbReference type="BioGRID" id="118843">
    <property type="interactions" value="20"/>
</dbReference>
<dbReference type="FunCoup" id="Q9H0I3">
    <property type="interactions" value="149"/>
</dbReference>
<dbReference type="IntAct" id="Q9H0I3">
    <property type="interactions" value="17"/>
</dbReference>
<dbReference type="MINT" id="Q9H0I3"/>
<dbReference type="STRING" id="9606.ENSP00000219299"/>
<dbReference type="iPTMnet" id="Q9H0I3"/>
<dbReference type="PhosphoSitePlus" id="Q9H0I3"/>
<dbReference type="BioMuta" id="CCDC113"/>
<dbReference type="DMDM" id="74717983"/>
<dbReference type="jPOST" id="Q9H0I3"/>
<dbReference type="MassIVE" id="Q9H0I3"/>
<dbReference type="PaxDb" id="9606-ENSP00000219299"/>
<dbReference type="PeptideAtlas" id="Q9H0I3"/>
<dbReference type="ProteomicsDB" id="80283">
    <molecule id="Q9H0I3-1"/>
</dbReference>
<dbReference type="ProteomicsDB" id="80284">
    <molecule id="Q9H0I3-2"/>
</dbReference>
<dbReference type="Antibodypedia" id="54998">
    <property type="antibodies" value="83 antibodies from 14 providers"/>
</dbReference>
<dbReference type="DNASU" id="29070"/>
<dbReference type="Ensembl" id="ENST00000219299.8">
    <molecule id="Q9H0I3-1"/>
    <property type="protein sequence ID" value="ENSP00000219299.4"/>
    <property type="gene ID" value="ENSG00000103021.10"/>
</dbReference>
<dbReference type="Ensembl" id="ENST00000443128.6">
    <molecule id="Q9H0I3-2"/>
    <property type="protein sequence ID" value="ENSP00000402588.2"/>
    <property type="gene ID" value="ENSG00000103021.10"/>
</dbReference>
<dbReference type="GeneID" id="29070"/>
<dbReference type="KEGG" id="hsa:29070"/>
<dbReference type="MANE-Select" id="ENST00000219299.8">
    <property type="protein sequence ID" value="ENSP00000219299.4"/>
    <property type="RefSeq nucleotide sequence ID" value="NM_014157.4"/>
    <property type="RefSeq protein sequence ID" value="NP_054876.2"/>
</dbReference>
<dbReference type="UCSC" id="uc002ene.4">
    <molecule id="Q9H0I3-1"/>
    <property type="organism name" value="human"/>
</dbReference>
<dbReference type="AGR" id="HGNC:25002"/>
<dbReference type="CTD" id="29070"/>
<dbReference type="DisGeNET" id="29070"/>
<dbReference type="GeneCards" id="CFAP263"/>
<dbReference type="HGNC" id="HGNC:25002">
    <property type="gene designation" value="CFAP263"/>
</dbReference>
<dbReference type="HPA" id="ENSG00000103021">
    <property type="expression patterns" value="Tissue enhanced (fallopian)"/>
</dbReference>
<dbReference type="MIM" id="616070">
    <property type="type" value="gene"/>
</dbReference>
<dbReference type="neXtProt" id="NX_Q9H0I3"/>
<dbReference type="OpenTargets" id="ENSG00000103021"/>
<dbReference type="PharmGKB" id="PA145149245"/>
<dbReference type="VEuPathDB" id="HostDB:ENSG00000103021"/>
<dbReference type="eggNOG" id="ENOG502QU7J">
    <property type="taxonomic scope" value="Eukaryota"/>
</dbReference>
<dbReference type="GeneTree" id="ENSGT00940000154521"/>
<dbReference type="HOGENOM" id="CLU_046867_1_0_1"/>
<dbReference type="InParanoid" id="Q9H0I3"/>
<dbReference type="OMA" id="TCQQHRA"/>
<dbReference type="OrthoDB" id="10259713at2759"/>
<dbReference type="PAN-GO" id="Q9H0I3">
    <property type="GO annotations" value="3 GO annotations based on evolutionary models"/>
</dbReference>
<dbReference type="PhylomeDB" id="Q9H0I3"/>
<dbReference type="TreeFam" id="TF328830"/>
<dbReference type="PathwayCommons" id="Q9H0I3"/>
<dbReference type="SignaLink" id="Q9H0I3"/>
<dbReference type="BioGRID-ORCS" id="29070">
    <property type="hits" value="9 hits in 1158 CRISPR screens"/>
</dbReference>
<dbReference type="ChiTaRS" id="CCDC113">
    <property type="organism name" value="human"/>
</dbReference>
<dbReference type="GeneWiki" id="CCDC113"/>
<dbReference type="GenomeRNAi" id="29070"/>
<dbReference type="Pharos" id="Q9H0I3">
    <property type="development level" value="Tdark"/>
</dbReference>
<dbReference type="PRO" id="PR:Q9H0I3"/>
<dbReference type="Proteomes" id="UP000005640">
    <property type="component" value="Chromosome 16"/>
</dbReference>
<dbReference type="RNAct" id="Q9H0I3">
    <property type="molecule type" value="protein"/>
</dbReference>
<dbReference type="Bgee" id="ENSG00000103021">
    <property type="expression patterns" value="Expressed in bronchial epithelial cell and 177 other cell types or tissues"/>
</dbReference>
<dbReference type="ExpressionAtlas" id="Q9H0I3">
    <property type="expression patterns" value="baseline and differential"/>
</dbReference>
<dbReference type="GO" id="GO:0005930">
    <property type="term" value="C:axoneme"/>
    <property type="evidence" value="ECO:0000318"/>
    <property type="project" value="GO_Central"/>
</dbReference>
<dbReference type="GO" id="GO:0034451">
    <property type="term" value="C:centriolar satellite"/>
    <property type="evidence" value="ECO:0000315"/>
    <property type="project" value="UniProtKB"/>
</dbReference>
<dbReference type="GO" id="GO:0036064">
    <property type="term" value="C:ciliary basal body"/>
    <property type="evidence" value="ECO:0000314"/>
    <property type="project" value="GO_Central"/>
</dbReference>
<dbReference type="GO" id="GO:0032991">
    <property type="term" value="C:protein-containing complex"/>
    <property type="evidence" value="ECO:0000314"/>
    <property type="project" value="UniProtKB"/>
</dbReference>
<dbReference type="GO" id="GO:0060271">
    <property type="term" value="P:cilium assembly"/>
    <property type="evidence" value="ECO:0000315"/>
    <property type="project" value="UniProtKB"/>
</dbReference>
<dbReference type="InterPro" id="IPR051885">
    <property type="entry name" value="CC_domain-Cilium_Assoc"/>
</dbReference>
<dbReference type="InterPro" id="IPR025254">
    <property type="entry name" value="CCDC113/CCDC96_CC"/>
</dbReference>
<dbReference type="PANTHER" id="PTHR15654:SF2">
    <property type="entry name" value="COILED-COIL DOMAIN-CONTAINING PROTEIN 113"/>
    <property type="match status" value="1"/>
</dbReference>
<dbReference type="PANTHER" id="PTHR15654">
    <property type="entry name" value="COILED-COIL DOMAIN-CONTAINING PROTEIN 113-RELATED"/>
    <property type="match status" value="1"/>
</dbReference>
<dbReference type="Pfam" id="PF13870">
    <property type="entry name" value="CCDC113_CCDC96_CC"/>
    <property type="match status" value="1"/>
</dbReference>
<sequence>MTDDESESVLSDSHEGSELELPVIQLCGLVEELSYVNSALKTETEMFEKYYAKLEPRDQRPPRLSEIKISAADYAQFRGRRRSKSRTGMDRGVGLTADQKLELVQKEVADMKDDLRHTRANAERDLQHHEAIIEEAEIRWSEVSREVHEFEKDILKAISKKKGSILATQKVMKYIEDMNRRRDNMKEKLRLKNVSLKVQRKKMLLQLRQKEEVSEALHDVDFQQLKIENAQFLETIEARNQELTQLKLSSGNTLQVLNAYKSKLHKAMEIYLNLDKEILLRKELLEKIEKETLQVEEDRAKAEAVNKRLRKQLAEFRAPQVMTYVREKILNADLEKSIRMWERKVEIAEMSLKGHRKAWNRMKITNEQLQADYLAGK</sequence>
<organism>
    <name type="scientific">Homo sapiens</name>
    <name type="common">Human</name>
    <dbReference type="NCBI Taxonomy" id="9606"/>
    <lineage>
        <taxon>Eukaryota</taxon>
        <taxon>Metazoa</taxon>
        <taxon>Chordata</taxon>
        <taxon>Craniata</taxon>
        <taxon>Vertebrata</taxon>
        <taxon>Euteleostomi</taxon>
        <taxon>Mammalia</taxon>
        <taxon>Eutheria</taxon>
        <taxon>Euarchontoglires</taxon>
        <taxon>Primates</taxon>
        <taxon>Haplorrhini</taxon>
        <taxon>Catarrhini</taxon>
        <taxon>Hominidae</taxon>
        <taxon>Homo</taxon>
    </lineage>
</organism>
<accession>Q9H0I3</accession>
<accession>B2RAQ7</accession>
<accession>B4DR20</accession>
<accession>Q9NZX2</accession>
<comment type="function">
    <text evidence="1 3">Component of centriolar satellites contributing to primary cilium formation (PubMed:25074808). In complex with CFAP263, acts as a regulator of ciliary beating that connects radial spoke 3 (RS3) to the inner dynein arm (IDA) and the nexin-dynein regulatory complex (N-DRC). The complex is positioned parallel to N-DRC and forms a connection between the arch at the base of RS3, the IDA tail and N-DRC (By similarity).</text>
</comment>
<comment type="subunit">
    <text evidence="1 3">Forms a complex with CFAP184; the interaction is required for functional activity in cilia (By similarity). Interacts with HAP1 and PCM1 (PubMed:25074808).</text>
</comment>
<comment type="interaction">
    <interactant intactId="EBI-715690">
        <id>Q9H0I3</id>
    </interactant>
    <interactant intactId="EBI-7116203">
        <id>O75031</id>
        <label>HSF2BP</label>
    </interactant>
    <organismsDiffer>false</organismsDiffer>
    <experiments>3</experiments>
</comment>
<comment type="subcellular location">
    <subcellularLocation>
        <location evidence="3">Cytoplasm</location>
        <location evidence="3">Cytoskeleton</location>
        <location evidence="3">Microtubule organizing center</location>
        <location evidence="3">Centrosome</location>
        <location evidence="3">Centriolar satellite</location>
    </subcellularLocation>
    <subcellularLocation>
        <location evidence="1">Cell projection</location>
        <location evidence="1">Cilium</location>
    </subcellularLocation>
    <text evidence="1 3">Colocalized with HAP1 at centriolar satellites. Centriolar satellite localization requires PCM1 (PubMed:25074808). Localizes at cilium but not at the ciliary tips (By similarity).</text>
</comment>
<comment type="alternative products">
    <event type="alternative splicing"/>
    <isoform>
        <id>Q9H0I3-1</id>
        <name>1</name>
        <sequence type="displayed"/>
    </isoform>
    <isoform>
        <id>Q9H0I3-2</id>
        <name>2</name>
        <sequence type="described" ref="VSP_042753"/>
    </isoform>
</comment>
<comment type="similarity">
    <text evidence="5">Belongs to the CFAP263 family.</text>
</comment>
<comment type="sequence caution" evidence="5">
    <conflict type="frameshift">
        <sequence resource="EMBL-CDS" id="AAF29037"/>
    </conflict>
</comment>
<reference key="1">
    <citation type="journal article" date="2000" name="Genome Res.">
        <title>Cloning and functional analysis of cDNAs with open reading frames for 300 previously undefined genes expressed in CD34+ hematopoietic stem/progenitor cells.</title>
        <authorList>
            <person name="Zhang Q.-H."/>
            <person name="Ye M."/>
            <person name="Wu X.-Y."/>
            <person name="Ren S.-X."/>
            <person name="Zhao M."/>
            <person name="Zhao C.-J."/>
            <person name="Fu G."/>
            <person name="Shen Y."/>
            <person name="Fan H.-Y."/>
            <person name="Lu G."/>
            <person name="Zhong M."/>
            <person name="Xu X.-R."/>
            <person name="Han Z.-G."/>
            <person name="Zhang J.-W."/>
            <person name="Tao J."/>
            <person name="Huang Q.-H."/>
            <person name="Zhou J."/>
            <person name="Hu G.-X."/>
            <person name="Gu J."/>
            <person name="Chen S.-J."/>
            <person name="Chen Z."/>
        </authorList>
    </citation>
    <scope>NUCLEOTIDE SEQUENCE [LARGE SCALE MRNA] (ISOFORM 1)</scope>
    <source>
        <tissue>Umbilical cord blood</tissue>
    </source>
</reference>
<reference key="2">
    <citation type="journal article" date="2001" name="Genome Res.">
        <title>Towards a catalog of human genes and proteins: sequencing and analysis of 500 novel complete protein coding human cDNAs.</title>
        <authorList>
            <person name="Wiemann S."/>
            <person name="Weil B."/>
            <person name="Wellenreuther R."/>
            <person name="Gassenhuber J."/>
            <person name="Glassl S."/>
            <person name="Ansorge W."/>
            <person name="Boecher M."/>
            <person name="Bloecker H."/>
            <person name="Bauersachs S."/>
            <person name="Blum H."/>
            <person name="Lauber J."/>
            <person name="Duesterhoeft A."/>
            <person name="Beyer A."/>
            <person name="Koehrer K."/>
            <person name="Strack N."/>
            <person name="Mewes H.-W."/>
            <person name="Ottenwaelder B."/>
            <person name="Obermaier B."/>
            <person name="Tampe J."/>
            <person name="Heubner D."/>
            <person name="Wambutt R."/>
            <person name="Korn B."/>
            <person name="Klein M."/>
            <person name="Poustka A."/>
        </authorList>
    </citation>
    <scope>NUCLEOTIDE SEQUENCE [LARGE SCALE MRNA] (ISOFORM 1)</scope>
    <source>
        <tissue>Testis</tissue>
    </source>
</reference>
<reference key="3">
    <citation type="submission" date="2004-06" db="EMBL/GenBank/DDBJ databases">
        <title>Cloning of human full open reading frames in Gateway(TM) system entry vector (pDONR201).</title>
        <authorList>
            <person name="Ebert L."/>
            <person name="Schick M."/>
            <person name="Neubert P."/>
            <person name="Schatten R."/>
            <person name="Henze S."/>
            <person name="Korn B."/>
        </authorList>
    </citation>
    <scope>NUCLEOTIDE SEQUENCE [LARGE SCALE MRNA] (ISOFORM 1)</scope>
</reference>
<reference key="4">
    <citation type="journal article" date="2004" name="Nat. Genet.">
        <title>Complete sequencing and characterization of 21,243 full-length human cDNAs.</title>
        <authorList>
            <person name="Ota T."/>
            <person name="Suzuki Y."/>
            <person name="Nishikawa T."/>
            <person name="Otsuki T."/>
            <person name="Sugiyama T."/>
            <person name="Irie R."/>
            <person name="Wakamatsu A."/>
            <person name="Hayashi K."/>
            <person name="Sato H."/>
            <person name="Nagai K."/>
            <person name="Kimura K."/>
            <person name="Makita H."/>
            <person name="Sekine M."/>
            <person name="Obayashi M."/>
            <person name="Nishi T."/>
            <person name="Shibahara T."/>
            <person name="Tanaka T."/>
            <person name="Ishii S."/>
            <person name="Yamamoto J."/>
            <person name="Saito K."/>
            <person name="Kawai Y."/>
            <person name="Isono Y."/>
            <person name="Nakamura Y."/>
            <person name="Nagahari K."/>
            <person name="Murakami K."/>
            <person name="Yasuda T."/>
            <person name="Iwayanagi T."/>
            <person name="Wagatsuma M."/>
            <person name="Shiratori A."/>
            <person name="Sudo H."/>
            <person name="Hosoiri T."/>
            <person name="Kaku Y."/>
            <person name="Kodaira H."/>
            <person name="Kondo H."/>
            <person name="Sugawara M."/>
            <person name="Takahashi M."/>
            <person name="Kanda K."/>
            <person name="Yokoi T."/>
            <person name="Furuya T."/>
            <person name="Kikkawa E."/>
            <person name="Omura Y."/>
            <person name="Abe K."/>
            <person name="Kamihara K."/>
            <person name="Katsuta N."/>
            <person name="Sato K."/>
            <person name="Tanikawa M."/>
            <person name="Yamazaki M."/>
            <person name="Ninomiya K."/>
            <person name="Ishibashi T."/>
            <person name="Yamashita H."/>
            <person name="Murakawa K."/>
            <person name="Fujimori K."/>
            <person name="Tanai H."/>
            <person name="Kimata M."/>
            <person name="Watanabe M."/>
            <person name="Hiraoka S."/>
            <person name="Chiba Y."/>
            <person name="Ishida S."/>
            <person name="Ono Y."/>
            <person name="Takiguchi S."/>
            <person name="Watanabe S."/>
            <person name="Yosida M."/>
            <person name="Hotuta T."/>
            <person name="Kusano J."/>
            <person name="Kanehori K."/>
            <person name="Takahashi-Fujii A."/>
            <person name="Hara H."/>
            <person name="Tanase T.-O."/>
            <person name="Nomura Y."/>
            <person name="Togiya S."/>
            <person name="Komai F."/>
            <person name="Hara R."/>
            <person name="Takeuchi K."/>
            <person name="Arita M."/>
            <person name="Imose N."/>
            <person name="Musashino K."/>
            <person name="Yuuki H."/>
            <person name="Oshima A."/>
            <person name="Sasaki N."/>
            <person name="Aotsuka S."/>
            <person name="Yoshikawa Y."/>
            <person name="Matsunawa H."/>
            <person name="Ichihara T."/>
            <person name="Shiohata N."/>
            <person name="Sano S."/>
            <person name="Moriya S."/>
            <person name="Momiyama H."/>
            <person name="Satoh N."/>
            <person name="Takami S."/>
            <person name="Terashima Y."/>
            <person name="Suzuki O."/>
            <person name="Nakagawa S."/>
            <person name="Senoh A."/>
            <person name="Mizoguchi H."/>
            <person name="Goto Y."/>
            <person name="Shimizu F."/>
            <person name="Wakebe H."/>
            <person name="Hishigaki H."/>
            <person name="Watanabe T."/>
            <person name="Sugiyama A."/>
            <person name="Takemoto M."/>
            <person name="Kawakami B."/>
            <person name="Yamazaki M."/>
            <person name="Watanabe K."/>
            <person name="Kumagai A."/>
            <person name="Itakura S."/>
            <person name="Fukuzumi Y."/>
            <person name="Fujimori Y."/>
            <person name="Komiyama M."/>
            <person name="Tashiro H."/>
            <person name="Tanigami A."/>
            <person name="Fujiwara T."/>
            <person name="Ono T."/>
            <person name="Yamada K."/>
            <person name="Fujii Y."/>
            <person name="Ozaki K."/>
            <person name="Hirao M."/>
            <person name="Ohmori Y."/>
            <person name="Kawabata A."/>
            <person name="Hikiji T."/>
            <person name="Kobatake N."/>
            <person name="Inagaki H."/>
            <person name="Ikema Y."/>
            <person name="Okamoto S."/>
            <person name="Okitani R."/>
            <person name="Kawakami T."/>
            <person name="Noguchi S."/>
            <person name="Itoh T."/>
            <person name="Shigeta K."/>
            <person name="Senba T."/>
            <person name="Matsumura K."/>
            <person name="Nakajima Y."/>
            <person name="Mizuno T."/>
            <person name="Morinaga M."/>
            <person name="Sasaki M."/>
            <person name="Togashi T."/>
            <person name="Oyama M."/>
            <person name="Hata H."/>
            <person name="Watanabe M."/>
            <person name="Komatsu T."/>
            <person name="Mizushima-Sugano J."/>
            <person name="Satoh T."/>
            <person name="Shirai Y."/>
            <person name="Takahashi Y."/>
            <person name="Nakagawa K."/>
            <person name="Okumura K."/>
            <person name="Nagase T."/>
            <person name="Nomura N."/>
            <person name="Kikuchi H."/>
            <person name="Masuho Y."/>
            <person name="Yamashita R."/>
            <person name="Nakai K."/>
            <person name="Yada T."/>
            <person name="Nakamura Y."/>
            <person name="Ohara O."/>
            <person name="Isogai T."/>
            <person name="Sugano S."/>
        </authorList>
    </citation>
    <scope>NUCLEOTIDE SEQUENCE [LARGE SCALE MRNA] (ISOFORMS 1 AND 2)</scope>
</reference>
<reference key="5">
    <citation type="journal article" date="2004" name="Nature">
        <title>The sequence and analysis of duplication-rich human chromosome 16.</title>
        <authorList>
            <person name="Martin J."/>
            <person name="Han C."/>
            <person name="Gordon L.A."/>
            <person name="Terry A."/>
            <person name="Prabhakar S."/>
            <person name="She X."/>
            <person name="Xie G."/>
            <person name="Hellsten U."/>
            <person name="Chan Y.M."/>
            <person name="Altherr M."/>
            <person name="Couronne O."/>
            <person name="Aerts A."/>
            <person name="Bajorek E."/>
            <person name="Black S."/>
            <person name="Blumer H."/>
            <person name="Branscomb E."/>
            <person name="Brown N.C."/>
            <person name="Bruno W.J."/>
            <person name="Buckingham J.M."/>
            <person name="Callen D.F."/>
            <person name="Campbell C.S."/>
            <person name="Campbell M.L."/>
            <person name="Campbell E.W."/>
            <person name="Caoile C."/>
            <person name="Challacombe J.F."/>
            <person name="Chasteen L.A."/>
            <person name="Chertkov O."/>
            <person name="Chi H.C."/>
            <person name="Christensen M."/>
            <person name="Clark L.M."/>
            <person name="Cohn J.D."/>
            <person name="Denys M."/>
            <person name="Detter J.C."/>
            <person name="Dickson M."/>
            <person name="Dimitrijevic-Bussod M."/>
            <person name="Escobar J."/>
            <person name="Fawcett J.J."/>
            <person name="Flowers D."/>
            <person name="Fotopulos D."/>
            <person name="Glavina T."/>
            <person name="Gomez M."/>
            <person name="Gonzales E."/>
            <person name="Goodstein D."/>
            <person name="Goodwin L.A."/>
            <person name="Grady D.L."/>
            <person name="Grigoriev I."/>
            <person name="Groza M."/>
            <person name="Hammon N."/>
            <person name="Hawkins T."/>
            <person name="Haydu L."/>
            <person name="Hildebrand C.E."/>
            <person name="Huang W."/>
            <person name="Israni S."/>
            <person name="Jett J."/>
            <person name="Jewett P.B."/>
            <person name="Kadner K."/>
            <person name="Kimball H."/>
            <person name="Kobayashi A."/>
            <person name="Krawczyk M.-C."/>
            <person name="Leyba T."/>
            <person name="Longmire J.L."/>
            <person name="Lopez F."/>
            <person name="Lou Y."/>
            <person name="Lowry S."/>
            <person name="Ludeman T."/>
            <person name="Manohar C.F."/>
            <person name="Mark G.A."/>
            <person name="McMurray K.L."/>
            <person name="Meincke L.J."/>
            <person name="Morgan J."/>
            <person name="Moyzis R.K."/>
            <person name="Mundt M.O."/>
            <person name="Munk A.C."/>
            <person name="Nandkeshwar R.D."/>
            <person name="Pitluck S."/>
            <person name="Pollard M."/>
            <person name="Predki P."/>
            <person name="Parson-Quintana B."/>
            <person name="Ramirez L."/>
            <person name="Rash S."/>
            <person name="Retterer J."/>
            <person name="Ricke D.O."/>
            <person name="Robinson D.L."/>
            <person name="Rodriguez A."/>
            <person name="Salamov A."/>
            <person name="Saunders E.H."/>
            <person name="Scott D."/>
            <person name="Shough T."/>
            <person name="Stallings R.L."/>
            <person name="Stalvey M."/>
            <person name="Sutherland R.D."/>
            <person name="Tapia R."/>
            <person name="Tesmer J.G."/>
            <person name="Thayer N."/>
            <person name="Thompson L.S."/>
            <person name="Tice H."/>
            <person name="Torney D.C."/>
            <person name="Tran-Gyamfi M."/>
            <person name="Tsai M."/>
            <person name="Ulanovsky L.E."/>
            <person name="Ustaszewska A."/>
            <person name="Vo N."/>
            <person name="White P.S."/>
            <person name="Williams A.L."/>
            <person name="Wills P.L."/>
            <person name="Wu J.-R."/>
            <person name="Wu K."/>
            <person name="Yang J."/>
            <person name="DeJong P."/>
            <person name="Bruce D."/>
            <person name="Doggett N.A."/>
            <person name="Deaven L."/>
            <person name="Schmutz J."/>
            <person name="Grimwood J."/>
            <person name="Richardson P."/>
            <person name="Rokhsar D.S."/>
            <person name="Eichler E.E."/>
            <person name="Gilna P."/>
            <person name="Lucas S.M."/>
            <person name="Myers R.M."/>
            <person name="Rubin E.M."/>
            <person name="Pennacchio L.A."/>
        </authorList>
    </citation>
    <scope>NUCLEOTIDE SEQUENCE [LARGE SCALE GENOMIC DNA]</scope>
</reference>
<reference key="6">
    <citation type="submission" date="2005-07" db="EMBL/GenBank/DDBJ databases">
        <authorList>
            <person name="Mural R.J."/>
            <person name="Istrail S."/>
            <person name="Sutton G.G."/>
            <person name="Florea L."/>
            <person name="Halpern A.L."/>
            <person name="Mobarry C.M."/>
            <person name="Lippert R."/>
            <person name="Walenz B."/>
            <person name="Shatkay H."/>
            <person name="Dew I."/>
            <person name="Miller J.R."/>
            <person name="Flanigan M.J."/>
            <person name="Edwards N.J."/>
            <person name="Bolanos R."/>
            <person name="Fasulo D."/>
            <person name="Halldorsson B.V."/>
            <person name="Hannenhalli S."/>
            <person name="Turner R."/>
            <person name="Yooseph S."/>
            <person name="Lu F."/>
            <person name="Nusskern D.R."/>
            <person name="Shue B.C."/>
            <person name="Zheng X.H."/>
            <person name="Zhong F."/>
            <person name="Delcher A.L."/>
            <person name="Huson D.H."/>
            <person name="Kravitz S.A."/>
            <person name="Mouchard L."/>
            <person name="Reinert K."/>
            <person name="Remington K.A."/>
            <person name="Clark A.G."/>
            <person name="Waterman M.S."/>
            <person name="Eichler E.E."/>
            <person name="Adams M.D."/>
            <person name="Hunkapiller M.W."/>
            <person name="Myers E.W."/>
            <person name="Venter J.C."/>
        </authorList>
    </citation>
    <scope>NUCLEOTIDE SEQUENCE [LARGE SCALE GENOMIC DNA]</scope>
</reference>
<reference key="7">
    <citation type="journal article" date="2004" name="Genome Res.">
        <title>The status, quality, and expansion of the NIH full-length cDNA project: the Mammalian Gene Collection (MGC).</title>
        <authorList>
            <consortium name="The MGC Project Team"/>
        </authorList>
    </citation>
    <scope>NUCLEOTIDE SEQUENCE [LARGE SCALE MRNA] (ISOFORM 1)</scope>
    <source>
        <tissue>Brain</tissue>
    </source>
</reference>
<reference key="8">
    <citation type="journal article" date="2014" name="J. Cell Sci.">
        <title>Proteomic analysis of mammalian sperm cells identifies new components of the centrosome.</title>
        <authorList>
            <person name="Firat-Karalar E.N."/>
            <person name="Sante J."/>
            <person name="Elliott S."/>
            <person name="Stearns T."/>
        </authorList>
    </citation>
    <scope>SUBCELLULAR LOCATION</scope>
    <scope>INTERACTION WITH HAP1 AND PCM1</scope>
    <scope>FUNCTION</scope>
</reference>
<name>CF263_HUMAN</name>